<feature type="chain" id="PRO_1000147448" description="Bifunctional protein FolD">
    <location>
        <begin position="1"/>
        <end position="286"/>
    </location>
</feature>
<feature type="binding site" evidence="1">
    <location>
        <begin position="165"/>
        <end position="167"/>
    </location>
    <ligand>
        <name>NADP(+)</name>
        <dbReference type="ChEBI" id="CHEBI:58349"/>
    </ligand>
</feature>
<feature type="binding site" evidence="1">
    <location>
        <position position="190"/>
    </location>
    <ligand>
        <name>NADP(+)</name>
        <dbReference type="ChEBI" id="CHEBI:58349"/>
    </ligand>
</feature>
<gene>
    <name evidence="1" type="primary">folD</name>
    <name type="ordered locus">BceJ2315_21750</name>
    <name type="ORF">BCAL2212</name>
</gene>
<evidence type="ECO:0000255" key="1">
    <source>
        <dbReference type="HAMAP-Rule" id="MF_01576"/>
    </source>
</evidence>
<accession>B4EDU1</accession>
<organism>
    <name type="scientific">Burkholderia cenocepacia (strain ATCC BAA-245 / DSM 16553 / LMG 16656 / NCTC 13227 / J2315 / CF5610)</name>
    <name type="common">Burkholderia cepacia (strain J2315)</name>
    <dbReference type="NCBI Taxonomy" id="216591"/>
    <lineage>
        <taxon>Bacteria</taxon>
        <taxon>Pseudomonadati</taxon>
        <taxon>Pseudomonadota</taxon>
        <taxon>Betaproteobacteria</taxon>
        <taxon>Burkholderiales</taxon>
        <taxon>Burkholderiaceae</taxon>
        <taxon>Burkholderia</taxon>
        <taxon>Burkholderia cepacia complex</taxon>
    </lineage>
</organism>
<protein>
    <recommendedName>
        <fullName evidence="1">Bifunctional protein FolD</fullName>
    </recommendedName>
    <domain>
        <recommendedName>
            <fullName evidence="1">Methylenetetrahydrofolate dehydrogenase</fullName>
            <ecNumber evidence="1">1.5.1.5</ecNumber>
        </recommendedName>
    </domain>
    <domain>
        <recommendedName>
            <fullName evidence="1">Methenyltetrahydrofolate cyclohydrolase</fullName>
            <ecNumber evidence="1">3.5.4.9</ecNumber>
        </recommendedName>
    </domain>
</protein>
<dbReference type="EC" id="1.5.1.5" evidence="1"/>
<dbReference type="EC" id="3.5.4.9" evidence="1"/>
<dbReference type="EMBL" id="AM747720">
    <property type="protein sequence ID" value="CAR52513.1"/>
    <property type="molecule type" value="Genomic_DNA"/>
</dbReference>
<dbReference type="RefSeq" id="WP_006482550.1">
    <property type="nucleotide sequence ID" value="NC_011000.1"/>
</dbReference>
<dbReference type="SMR" id="B4EDU1"/>
<dbReference type="GeneID" id="56558709"/>
<dbReference type="KEGG" id="bcj:BCAL2212"/>
<dbReference type="eggNOG" id="COG0190">
    <property type="taxonomic scope" value="Bacteria"/>
</dbReference>
<dbReference type="HOGENOM" id="CLU_034045_2_1_4"/>
<dbReference type="BioCyc" id="BCEN216591:G1G1V-2428-MONOMER"/>
<dbReference type="UniPathway" id="UPA00193"/>
<dbReference type="Proteomes" id="UP000001035">
    <property type="component" value="Chromosome 1"/>
</dbReference>
<dbReference type="GO" id="GO:0005829">
    <property type="term" value="C:cytosol"/>
    <property type="evidence" value="ECO:0007669"/>
    <property type="project" value="TreeGrafter"/>
</dbReference>
<dbReference type="GO" id="GO:0004477">
    <property type="term" value="F:methenyltetrahydrofolate cyclohydrolase activity"/>
    <property type="evidence" value="ECO:0007669"/>
    <property type="project" value="UniProtKB-UniRule"/>
</dbReference>
<dbReference type="GO" id="GO:0004488">
    <property type="term" value="F:methylenetetrahydrofolate dehydrogenase (NADP+) activity"/>
    <property type="evidence" value="ECO:0007669"/>
    <property type="project" value="UniProtKB-UniRule"/>
</dbReference>
<dbReference type="GO" id="GO:0000105">
    <property type="term" value="P:L-histidine biosynthetic process"/>
    <property type="evidence" value="ECO:0007669"/>
    <property type="project" value="UniProtKB-KW"/>
</dbReference>
<dbReference type="GO" id="GO:0009086">
    <property type="term" value="P:methionine biosynthetic process"/>
    <property type="evidence" value="ECO:0007669"/>
    <property type="project" value="UniProtKB-KW"/>
</dbReference>
<dbReference type="GO" id="GO:0006164">
    <property type="term" value="P:purine nucleotide biosynthetic process"/>
    <property type="evidence" value="ECO:0007669"/>
    <property type="project" value="UniProtKB-KW"/>
</dbReference>
<dbReference type="GO" id="GO:0035999">
    <property type="term" value="P:tetrahydrofolate interconversion"/>
    <property type="evidence" value="ECO:0007669"/>
    <property type="project" value="UniProtKB-UniRule"/>
</dbReference>
<dbReference type="CDD" id="cd01080">
    <property type="entry name" value="NAD_bind_m-THF_DH_Cyclohyd"/>
    <property type="match status" value="1"/>
</dbReference>
<dbReference type="FunFam" id="3.40.50.720:FF:000094">
    <property type="entry name" value="Bifunctional protein FolD"/>
    <property type="match status" value="1"/>
</dbReference>
<dbReference type="FunFam" id="3.40.50.10860:FF:000005">
    <property type="entry name" value="C-1-tetrahydrofolate synthase, cytoplasmic, putative"/>
    <property type="match status" value="1"/>
</dbReference>
<dbReference type="Gene3D" id="3.40.50.10860">
    <property type="entry name" value="Leucine Dehydrogenase, chain A, domain 1"/>
    <property type="match status" value="1"/>
</dbReference>
<dbReference type="Gene3D" id="3.40.50.720">
    <property type="entry name" value="NAD(P)-binding Rossmann-like Domain"/>
    <property type="match status" value="1"/>
</dbReference>
<dbReference type="HAMAP" id="MF_01576">
    <property type="entry name" value="THF_DHG_CYH"/>
    <property type="match status" value="1"/>
</dbReference>
<dbReference type="InterPro" id="IPR046346">
    <property type="entry name" value="Aminoacid_DH-like_N_sf"/>
</dbReference>
<dbReference type="InterPro" id="IPR036291">
    <property type="entry name" value="NAD(P)-bd_dom_sf"/>
</dbReference>
<dbReference type="InterPro" id="IPR000672">
    <property type="entry name" value="THF_DH/CycHdrlase"/>
</dbReference>
<dbReference type="InterPro" id="IPR020630">
    <property type="entry name" value="THF_DH/CycHdrlase_cat_dom"/>
</dbReference>
<dbReference type="InterPro" id="IPR020867">
    <property type="entry name" value="THF_DH/CycHdrlase_CS"/>
</dbReference>
<dbReference type="InterPro" id="IPR020631">
    <property type="entry name" value="THF_DH/CycHdrlase_NAD-bd_dom"/>
</dbReference>
<dbReference type="NCBIfam" id="NF008058">
    <property type="entry name" value="PRK10792.1"/>
    <property type="match status" value="1"/>
</dbReference>
<dbReference type="NCBIfam" id="NF010783">
    <property type="entry name" value="PRK14186.1"/>
    <property type="match status" value="1"/>
</dbReference>
<dbReference type="NCBIfam" id="NF010786">
    <property type="entry name" value="PRK14189.1"/>
    <property type="match status" value="1"/>
</dbReference>
<dbReference type="PANTHER" id="PTHR48099:SF5">
    <property type="entry name" value="C-1-TETRAHYDROFOLATE SYNTHASE, CYTOPLASMIC"/>
    <property type="match status" value="1"/>
</dbReference>
<dbReference type="PANTHER" id="PTHR48099">
    <property type="entry name" value="C-1-TETRAHYDROFOLATE SYNTHASE, CYTOPLASMIC-RELATED"/>
    <property type="match status" value="1"/>
</dbReference>
<dbReference type="Pfam" id="PF00763">
    <property type="entry name" value="THF_DHG_CYH"/>
    <property type="match status" value="1"/>
</dbReference>
<dbReference type="Pfam" id="PF02882">
    <property type="entry name" value="THF_DHG_CYH_C"/>
    <property type="match status" value="1"/>
</dbReference>
<dbReference type="PRINTS" id="PR00085">
    <property type="entry name" value="THFDHDRGNASE"/>
</dbReference>
<dbReference type="SUPFAM" id="SSF53223">
    <property type="entry name" value="Aminoacid dehydrogenase-like, N-terminal domain"/>
    <property type="match status" value="1"/>
</dbReference>
<dbReference type="SUPFAM" id="SSF51735">
    <property type="entry name" value="NAD(P)-binding Rossmann-fold domains"/>
    <property type="match status" value="1"/>
</dbReference>
<dbReference type="PROSITE" id="PS00766">
    <property type="entry name" value="THF_DHG_CYH_1"/>
    <property type="match status" value="1"/>
</dbReference>
<dbReference type="PROSITE" id="PS00767">
    <property type="entry name" value="THF_DHG_CYH_2"/>
    <property type="match status" value="1"/>
</dbReference>
<keyword id="KW-0028">Amino-acid biosynthesis</keyword>
<keyword id="KW-0368">Histidine biosynthesis</keyword>
<keyword id="KW-0378">Hydrolase</keyword>
<keyword id="KW-0486">Methionine biosynthesis</keyword>
<keyword id="KW-0511">Multifunctional enzyme</keyword>
<keyword id="KW-0521">NADP</keyword>
<keyword id="KW-0554">One-carbon metabolism</keyword>
<keyword id="KW-0560">Oxidoreductase</keyword>
<keyword id="KW-0658">Purine biosynthesis</keyword>
<sequence>MTALLIDGNALSKTLRGQAAERAAALTARGHQPGLAVILVGENPASEVYVRNKIKACEDNGFFSLKDAYPATLSEADLLARIDELNRDPKIHGILVQLPLPAHIDSHKVIEAIAPEKDVDGFHVANAGALMTGKPLFRPCTPYGVMKMFEAHGIALQGANAVVIGRSNIVGKPMAMMLLDAGATVTICHSKTRDLAAHTREADIVVAAVGKRNILTADMVKPGATVIDVGMNRDDAGKLCGDVDFAGVKEVAGYITPVPGGVGPMTITMLLINTIESAERAAAAAA</sequence>
<proteinExistence type="inferred from homology"/>
<comment type="function">
    <text evidence="1">Catalyzes the oxidation of 5,10-methylenetetrahydrofolate to 5,10-methenyltetrahydrofolate and then the hydrolysis of 5,10-methenyltetrahydrofolate to 10-formyltetrahydrofolate.</text>
</comment>
<comment type="catalytic activity">
    <reaction evidence="1">
        <text>(6R)-5,10-methylene-5,6,7,8-tetrahydrofolate + NADP(+) = (6R)-5,10-methenyltetrahydrofolate + NADPH</text>
        <dbReference type="Rhea" id="RHEA:22812"/>
        <dbReference type="ChEBI" id="CHEBI:15636"/>
        <dbReference type="ChEBI" id="CHEBI:57455"/>
        <dbReference type="ChEBI" id="CHEBI:57783"/>
        <dbReference type="ChEBI" id="CHEBI:58349"/>
        <dbReference type="EC" id="1.5.1.5"/>
    </reaction>
</comment>
<comment type="catalytic activity">
    <reaction evidence="1">
        <text>(6R)-5,10-methenyltetrahydrofolate + H2O = (6R)-10-formyltetrahydrofolate + H(+)</text>
        <dbReference type="Rhea" id="RHEA:23700"/>
        <dbReference type="ChEBI" id="CHEBI:15377"/>
        <dbReference type="ChEBI" id="CHEBI:15378"/>
        <dbReference type="ChEBI" id="CHEBI:57455"/>
        <dbReference type="ChEBI" id="CHEBI:195366"/>
        <dbReference type="EC" id="3.5.4.9"/>
    </reaction>
</comment>
<comment type="pathway">
    <text evidence="1">One-carbon metabolism; tetrahydrofolate interconversion.</text>
</comment>
<comment type="subunit">
    <text evidence="1">Homodimer.</text>
</comment>
<comment type="similarity">
    <text evidence="1">Belongs to the tetrahydrofolate dehydrogenase/cyclohydrolase family.</text>
</comment>
<name>FOLD_BURCJ</name>
<reference key="1">
    <citation type="journal article" date="2009" name="J. Bacteriol.">
        <title>The genome of Burkholderia cenocepacia J2315, an epidemic pathogen of cystic fibrosis patients.</title>
        <authorList>
            <person name="Holden M.T."/>
            <person name="Seth-Smith H.M."/>
            <person name="Crossman L.C."/>
            <person name="Sebaihia M."/>
            <person name="Bentley S.D."/>
            <person name="Cerdeno-Tarraga A.M."/>
            <person name="Thomson N.R."/>
            <person name="Bason N."/>
            <person name="Quail M.A."/>
            <person name="Sharp S."/>
            <person name="Cherevach I."/>
            <person name="Churcher C."/>
            <person name="Goodhead I."/>
            <person name="Hauser H."/>
            <person name="Holroyd N."/>
            <person name="Mungall K."/>
            <person name="Scott P."/>
            <person name="Walker D."/>
            <person name="White B."/>
            <person name="Rose H."/>
            <person name="Iversen P."/>
            <person name="Mil-Homens D."/>
            <person name="Rocha E.P."/>
            <person name="Fialho A.M."/>
            <person name="Baldwin A."/>
            <person name="Dowson C."/>
            <person name="Barrell B.G."/>
            <person name="Govan J.R."/>
            <person name="Vandamme P."/>
            <person name="Hart C.A."/>
            <person name="Mahenthiralingam E."/>
            <person name="Parkhill J."/>
        </authorList>
    </citation>
    <scope>NUCLEOTIDE SEQUENCE [LARGE SCALE GENOMIC DNA]</scope>
    <source>
        <strain>ATCC BAA-245 / DSM 16553 / LMG 16656 / NCTC 13227 / J2315 / CF5610</strain>
    </source>
</reference>